<protein>
    <recommendedName>
        <fullName evidence="1">Probable [Fe-S]-dependent transcriptional repressor</fullName>
    </recommendedName>
</protein>
<keyword id="KW-0238">DNA-binding</keyword>
<keyword id="KW-0408">Iron</keyword>
<keyword id="KW-0411">Iron-sulfur</keyword>
<keyword id="KW-0479">Metal-binding</keyword>
<keyword id="KW-1185">Reference proteome</keyword>
<keyword id="KW-0678">Repressor</keyword>
<keyword id="KW-0804">Transcription</keyword>
<keyword id="KW-0805">Transcription regulation</keyword>
<sequence>MATLIEVRDLLALSGRMDAQRISEQLATPMPLVNAMLSRLEAMGKAERQEEWLSGCLSGSCRHCPEGKACRKEVWQLR</sequence>
<feature type="chain" id="PRO_0000313056" description="Probable [Fe-S]-dependent transcriptional repressor">
    <location>
        <begin position="1"/>
        <end position="78"/>
    </location>
</feature>
<feature type="binding site" evidence="1">
    <location>
        <position position="56"/>
    </location>
    <ligand>
        <name>iron-sulfur cluster</name>
        <dbReference type="ChEBI" id="CHEBI:30408"/>
    </ligand>
</feature>
<feature type="binding site" evidence="1">
    <location>
        <position position="61"/>
    </location>
    <ligand>
        <name>iron-sulfur cluster</name>
        <dbReference type="ChEBI" id="CHEBI:30408"/>
    </ligand>
</feature>
<feature type="binding site" evidence="1">
    <location>
        <position position="64"/>
    </location>
    <ligand>
        <name>iron-sulfur cluster</name>
        <dbReference type="ChEBI" id="CHEBI:30408"/>
    </ligand>
</feature>
<feature type="binding site" evidence="1">
    <location>
        <position position="70"/>
    </location>
    <ligand>
        <name>iron-sulfur cluster</name>
        <dbReference type="ChEBI" id="CHEBI:30408"/>
    </ligand>
</feature>
<proteinExistence type="inferred from homology"/>
<organism>
    <name type="scientific">Cronobacter sakazakii (strain ATCC BAA-894)</name>
    <name type="common">Enterobacter sakazakii</name>
    <dbReference type="NCBI Taxonomy" id="290339"/>
    <lineage>
        <taxon>Bacteria</taxon>
        <taxon>Pseudomonadati</taxon>
        <taxon>Pseudomonadota</taxon>
        <taxon>Gammaproteobacteria</taxon>
        <taxon>Enterobacterales</taxon>
        <taxon>Enterobacteriaceae</taxon>
        <taxon>Cronobacter</taxon>
    </lineage>
</organism>
<name>FEOC_CROS8</name>
<accession>A7MGD4</accession>
<evidence type="ECO:0000255" key="1">
    <source>
        <dbReference type="HAMAP-Rule" id="MF_01586"/>
    </source>
</evidence>
<comment type="function">
    <text evidence="1">May function as a transcriptional regulator that controls feoABC expression.</text>
</comment>
<comment type="similarity">
    <text evidence="1">Belongs to the FeoC family.</text>
</comment>
<dbReference type="EMBL" id="CP000783">
    <property type="protein sequence ID" value="ABU79507.1"/>
    <property type="molecule type" value="Genomic_DNA"/>
</dbReference>
<dbReference type="RefSeq" id="WP_012126380.1">
    <property type="nucleotide sequence ID" value="NC_009778.1"/>
</dbReference>
<dbReference type="SMR" id="A7MGD4"/>
<dbReference type="KEGG" id="esa:ESA_04328"/>
<dbReference type="PATRIC" id="fig|290339.8.peg.3855"/>
<dbReference type="HOGENOM" id="CLU_189182_0_0_6"/>
<dbReference type="Proteomes" id="UP000000260">
    <property type="component" value="Chromosome"/>
</dbReference>
<dbReference type="GO" id="GO:0003677">
    <property type="term" value="F:DNA binding"/>
    <property type="evidence" value="ECO:0007669"/>
    <property type="project" value="UniProtKB-KW"/>
</dbReference>
<dbReference type="GO" id="GO:0005506">
    <property type="term" value="F:iron ion binding"/>
    <property type="evidence" value="ECO:0007669"/>
    <property type="project" value="UniProtKB-UniRule"/>
</dbReference>
<dbReference type="GO" id="GO:0051536">
    <property type="term" value="F:iron-sulfur cluster binding"/>
    <property type="evidence" value="ECO:0007669"/>
    <property type="project" value="UniProtKB-KW"/>
</dbReference>
<dbReference type="Gene3D" id="1.10.10.10">
    <property type="entry name" value="Winged helix-like DNA-binding domain superfamily/Winged helix DNA-binding domain"/>
    <property type="match status" value="1"/>
</dbReference>
<dbReference type="HAMAP" id="MF_01586">
    <property type="entry name" value="FeoC"/>
    <property type="match status" value="1"/>
</dbReference>
<dbReference type="InterPro" id="IPR023732">
    <property type="entry name" value="FeoC"/>
</dbReference>
<dbReference type="InterPro" id="IPR015102">
    <property type="entry name" value="Tscrpt_reg_HTH_FeoC"/>
</dbReference>
<dbReference type="InterPro" id="IPR036388">
    <property type="entry name" value="WH-like_DNA-bd_sf"/>
</dbReference>
<dbReference type="InterPro" id="IPR036390">
    <property type="entry name" value="WH_DNA-bd_sf"/>
</dbReference>
<dbReference type="NCBIfam" id="NF011960">
    <property type="entry name" value="PRK15431.1"/>
    <property type="match status" value="1"/>
</dbReference>
<dbReference type="Pfam" id="PF09012">
    <property type="entry name" value="FeoC"/>
    <property type="match status" value="1"/>
</dbReference>
<dbReference type="SUPFAM" id="SSF46785">
    <property type="entry name" value="Winged helix' DNA-binding domain"/>
    <property type="match status" value="1"/>
</dbReference>
<reference key="1">
    <citation type="journal article" date="2010" name="PLoS ONE">
        <title>Genome sequence of Cronobacter sakazakii BAA-894 and comparative genomic hybridization analysis with other Cronobacter species.</title>
        <authorList>
            <person name="Kucerova E."/>
            <person name="Clifton S.W."/>
            <person name="Xia X.Q."/>
            <person name="Long F."/>
            <person name="Porwollik S."/>
            <person name="Fulton L."/>
            <person name="Fronick C."/>
            <person name="Minx P."/>
            <person name="Kyung K."/>
            <person name="Warren W."/>
            <person name="Fulton R."/>
            <person name="Feng D."/>
            <person name="Wollam A."/>
            <person name="Shah N."/>
            <person name="Bhonagiri V."/>
            <person name="Nash W.E."/>
            <person name="Hallsworth-Pepin K."/>
            <person name="Wilson R.K."/>
            <person name="McClelland M."/>
            <person name="Forsythe S.J."/>
        </authorList>
    </citation>
    <scope>NUCLEOTIDE SEQUENCE [LARGE SCALE GENOMIC DNA]</scope>
    <source>
        <strain>ATCC BAA-894</strain>
    </source>
</reference>
<gene>
    <name evidence="1" type="primary">feoC</name>
    <name type="ordered locus">ESA_04328</name>
</gene>